<proteinExistence type="inferred from homology"/>
<accession>Q4ZRE3</accession>
<reference key="1">
    <citation type="journal article" date="2005" name="Proc. Natl. Acad. Sci. U.S.A.">
        <title>Comparison of the complete genome sequences of Pseudomonas syringae pv. syringae B728a and pv. tomato DC3000.</title>
        <authorList>
            <person name="Feil H."/>
            <person name="Feil W.S."/>
            <person name="Chain P."/>
            <person name="Larimer F."/>
            <person name="Dibartolo G."/>
            <person name="Copeland A."/>
            <person name="Lykidis A."/>
            <person name="Trong S."/>
            <person name="Nolan M."/>
            <person name="Goltsman E."/>
            <person name="Thiel J."/>
            <person name="Malfatti S."/>
            <person name="Loper J.E."/>
            <person name="Lapidus A."/>
            <person name="Detter J.C."/>
            <person name="Land M."/>
            <person name="Richardson P.M."/>
            <person name="Kyrpides N.C."/>
            <person name="Ivanova N."/>
            <person name="Lindow S.E."/>
        </authorList>
    </citation>
    <scope>NUCLEOTIDE SEQUENCE [LARGE SCALE GENOMIC DNA]</scope>
    <source>
        <strain>B728a</strain>
    </source>
</reference>
<name>SSUD_PSEU2</name>
<feature type="chain" id="PRO_1000066831" description="Alkanesulfonate monooxygenase">
    <location>
        <begin position="1"/>
        <end position="379"/>
    </location>
</feature>
<evidence type="ECO:0000255" key="1">
    <source>
        <dbReference type="HAMAP-Rule" id="MF_01229"/>
    </source>
</evidence>
<protein>
    <recommendedName>
        <fullName evidence="1">Alkanesulfonate monooxygenase</fullName>
        <ecNumber evidence="1">1.14.14.5</ecNumber>
    </recommendedName>
    <alternativeName>
        <fullName evidence="1">FMNH2-dependent aliphatic sulfonate monooxygenase</fullName>
    </alternativeName>
</protein>
<comment type="function">
    <text evidence="1">Catalyzes the desulfonation of aliphatic sulfonates.</text>
</comment>
<comment type="catalytic activity">
    <reaction evidence="1">
        <text>an alkanesulfonate + FMNH2 + O2 = an aldehyde + FMN + sulfite + H2O + 2 H(+)</text>
        <dbReference type="Rhea" id="RHEA:23064"/>
        <dbReference type="ChEBI" id="CHEBI:15377"/>
        <dbReference type="ChEBI" id="CHEBI:15378"/>
        <dbReference type="ChEBI" id="CHEBI:15379"/>
        <dbReference type="ChEBI" id="CHEBI:17359"/>
        <dbReference type="ChEBI" id="CHEBI:17478"/>
        <dbReference type="ChEBI" id="CHEBI:57618"/>
        <dbReference type="ChEBI" id="CHEBI:58210"/>
        <dbReference type="ChEBI" id="CHEBI:134249"/>
        <dbReference type="EC" id="1.14.14.5"/>
    </reaction>
</comment>
<comment type="similarity">
    <text evidence="1">Belongs to the SsuD family.</text>
</comment>
<dbReference type="EC" id="1.14.14.5" evidence="1"/>
<dbReference type="EMBL" id="CP000075">
    <property type="protein sequence ID" value="AAY38279.1"/>
    <property type="molecule type" value="Genomic_DNA"/>
</dbReference>
<dbReference type="RefSeq" id="WP_011268305.1">
    <property type="nucleotide sequence ID" value="NC_007005.1"/>
</dbReference>
<dbReference type="RefSeq" id="YP_236317.1">
    <property type="nucleotide sequence ID" value="NC_007005.1"/>
</dbReference>
<dbReference type="SMR" id="Q4ZRE3"/>
<dbReference type="STRING" id="205918.Psyr_3247"/>
<dbReference type="KEGG" id="psb:Psyr_3247"/>
<dbReference type="PATRIC" id="fig|205918.7.peg.3317"/>
<dbReference type="eggNOG" id="COG2141">
    <property type="taxonomic scope" value="Bacteria"/>
</dbReference>
<dbReference type="HOGENOM" id="CLU_027853_1_0_6"/>
<dbReference type="OrthoDB" id="9814695at2"/>
<dbReference type="Proteomes" id="UP000000426">
    <property type="component" value="Chromosome"/>
</dbReference>
<dbReference type="GO" id="GO:0008726">
    <property type="term" value="F:alkanesulfonate monooxygenase activity"/>
    <property type="evidence" value="ECO:0007669"/>
    <property type="project" value="UniProtKB-UniRule"/>
</dbReference>
<dbReference type="GO" id="GO:0046306">
    <property type="term" value="P:alkanesulfonate catabolic process"/>
    <property type="evidence" value="ECO:0007669"/>
    <property type="project" value="TreeGrafter"/>
</dbReference>
<dbReference type="CDD" id="cd01094">
    <property type="entry name" value="Alkanesulfonate_monoxygenase"/>
    <property type="match status" value="1"/>
</dbReference>
<dbReference type="FunFam" id="3.20.20.30:FF:000001">
    <property type="entry name" value="Alkanesulfonate monooxygenase"/>
    <property type="match status" value="1"/>
</dbReference>
<dbReference type="Gene3D" id="3.20.20.30">
    <property type="entry name" value="Luciferase-like domain"/>
    <property type="match status" value="1"/>
</dbReference>
<dbReference type="HAMAP" id="MF_01229">
    <property type="entry name" value="Alkanesulf_monooxygen"/>
    <property type="match status" value="1"/>
</dbReference>
<dbReference type="InterPro" id="IPR019911">
    <property type="entry name" value="Alkanesulphonate_mOase_FMN-dep"/>
</dbReference>
<dbReference type="InterPro" id="IPR011251">
    <property type="entry name" value="Luciferase-like_dom"/>
</dbReference>
<dbReference type="InterPro" id="IPR036661">
    <property type="entry name" value="Luciferase-like_sf"/>
</dbReference>
<dbReference type="InterPro" id="IPR050172">
    <property type="entry name" value="SsuD_RutA_monooxygenase"/>
</dbReference>
<dbReference type="NCBIfam" id="TIGR03565">
    <property type="entry name" value="alk_sulf_monoox"/>
    <property type="match status" value="1"/>
</dbReference>
<dbReference type="NCBIfam" id="NF001939">
    <property type="entry name" value="PRK00719.1"/>
    <property type="match status" value="1"/>
</dbReference>
<dbReference type="PANTHER" id="PTHR42847">
    <property type="entry name" value="ALKANESULFONATE MONOOXYGENASE"/>
    <property type="match status" value="1"/>
</dbReference>
<dbReference type="PANTHER" id="PTHR42847:SF4">
    <property type="entry name" value="ALKANESULFONATE MONOOXYGENASE-RELATED"/>
    <property type="match status" value="1"/>
</dbReference>
<dbReference type="Pfam" id="PF00296">
    <property type="entry name" value="Bac_luciferase"/>
    <property type="match status" value="1"/>
</dbReference>
<dbReference type="SUPFAM" id="SSF51679">
    <property type="entry name" value="Bacterial luciferase-like"/>
    <property type="match status" value="1"/>
</dbReference>
<keyword id="KW-0285">Flavoprotein</keyword>
<keyword id="KW-0288">FMN</keyword>
<keyword id="KW-0503">Monooxygenase</keyword>
<keyword id="KW-0560">Oxidoreductase</keyword>
<gene>
    <name evidence="1" type="primary">ssuD</name>
    <name type="ordered locus">Psyr_3247</name>
</gene>
<organism>
    <name type="scientific">Pseudomonas syringae pv. syringae (strain B728a)</name>
    <dbReference type="NCBI Taxonomy" id="205918"/>
    <lineage>
        <taxon>Bacteria</taxon>
        <taxon>Pseudomonadati</taxon>
        <taxon>Pseudomonadota</taxon>
        <taxon>Gammaproteobacteria</taxon>
        <taxon>Pseudomonadales</taxon>
        <taxon>Pseudomonadaceae</taxon>
        <taxon>Pseudomonas</taxon>
        <taxon>Pseudomonas syringae</taxon>
    </lineage>
</organism>
<sequence>MNVFWFLPTHGDGHYLGTTKGARPVTLNYLKQVAQAADDLGYYGVLIPTGRSCEDSWVIASALVPLTERLRYLVAIRPGIISPTVSARMAATLDRLSGGRLLINVVTGGDPDENRGDGSFLDHSERYEVTDEFLKIWRRVLQGEAVDFEGKHLRVQNAKALYPPIQQPYPPLYFGGSSDAAHDLAADQVDVYLTWGEPPAAVAQKLADVRERAARKGRTVKFGIRLHVIVRETSEEAWKAASTLIEHISDDTIAAAQKSFSRFDSEGQRRMAALHDGRRDNLEIAPNLWAGVGLVRGGAGTALVGNPEEVAARIKEYADLGIESFIFSGYPHLEEAYRFAELVFPLLPEPYASLAGRGITNLTGPFGEMIANDLPPQAK</sequence>